<comment type="function">
    <text evidence="1">This protein is an aporepressor. When complexed with L-tryptophan it binds the operator region of the trp operon (5'-ACTAGT-'3') and prevents the initiation of transcription. The complex also regulates trp repressor biosynthesis by binding to its regulatory region.</text>
</comment>
<comment type="subunit">
    <text evidence="1">Homodimer.</text>
</comment>
<comment type="subcellular location">
    <subcellularLocation>
        <location evidence="1">Cytoplasm</location>
    </subcellularLocation>
</comment>
<comment type="similarity">
    <text evidence="1">Belongs to the TrpR family.</text>
</comment>
<evidence type="ECO:0000255" key="1">
    <source>
        <dbReference type="HAMAP-Rule" id="MF_00475"/>
    </source>
</evidence>
<reference key="1">
    <citation type="journal article" date="2011" name="J. Bacteriol.">
        <title>Comparative genomics of 28 Salmonella enterica isolates: evidence for CRISPR-mediated adaptive sublineage evolution.</title>
        <authorList>
            <person name="Fricke W.F."/>
            <person name="Mammel M.K."/>
            <person name="McDermott P.F."/>
            <person name="Tartera C."/>
            <person name="White D.G."/>
            <person name="Leclerc J.E."/>
            <person name="Ravel J."/>
            <person name="Cebula T.A."/>
        </authorList>
    </citation>
    <scope>NUCLEOTIDE SEQUENCE [LARGE SCALE GENOMIC DNA]</scope>
    <source>
        <strain>SL483</strain>
    </source>
</reference>
<protein>
    <recommendedName>
        <fullName evidence="1">Trp operon repressor</fullName>
    </recommendedName>
</protein>
<accession>B5F541</accession>
<sequence length="108" mass="12392">MTQHSPYSSAIAEQRNQEWLRFVELLRQAYAEDLHLPLLQLMLTPDEREALGTRVRIIEELLRGEMSQRELKTELGAGIATITRGSNSLKSAPVELRHWLEQILLKSA</sequence>
<name>TRPR_SALA4</name>
<feature type="chain" id="PRO_1000197151" description="Trp operon repressor">
    <location>
        <begin position="1"/>
        <end position="108"/>
    </location>
</feature>
<feature type="DNA-binding region" evidence="1">
    <location>
        <begin position="68"/>
        <end position="91"/>
    </location>
</feature>
<proteinExistence type="inferred from homology"/>
<dbReference type="EMBL" id="CP001138">
    <property type="protein sequence ID" value="ACH51386.1"/>
    <property type="molecule type" value="Genomic_DNA"/>
</dbReference>
<dbReference type="RefSeq" id="WP_000192005.1">
    <property type="nucleotide sequence ID" value="NC_011149.1"/>
</dbReference>
<dbReference type="SMR" id="B5F541"/>
<dbReference type="KEGG" id="sea:SeAg_B4907"/>
<dbReference type="HOGENOM" id="CLU_147939_0_0_6"/>
<dbReference type="Proteomes" id="UP000008819">
    <property type="component" value="Chromosome"/>
</dbReference>
<dbReference type="GO" id="GO:0005737">
    <property type="term" value="C:cytoplasm"/>
    <property type="evidence" value="ECO:0007669"/>
    <property type="project" value="UniProtKB-SubCell"/>
</dbReference>
<dbReference type="GO" id="GO:0003700">
    <property type="term" value="F:DNA-binding transcription factor activity"/>
    <property type="evidence" value="ECO:0007669"/>
    <property type="project" value="InterPro"/>
</dbReference>
<dbReference type="GO" id="GO:0043565">
    <property type="term" value="F:sequence-specific DNA binding"/>
    <property type="evidence" value="ECO:0007669"/>
    <property type="project" value="InterPro"/>
</dbReference>
<dbReference type="GO" id="GO:0045892">
    <property type="term" value="P:negative regulation of DNA-templated transcription"/>
    <property type="evidence" value="ECO:0007669"/>
    <property type="project" value="UniProtKB-UniRule"/>
</dbReference>
<dbReference type="FunFam" id="1.10.1270.10:FF:000001">
    <property type="entry name" value="Trp operon repressor"/>
    <property type="match status" value="1"/>
</dbReference>
<dbReference type="Gene3D" id="1.10.1270.10">
    <property type="entry name" value="TrpR-like"/>
    <property type="match status" value="1"/>
</dbReference>
<dbReference type="HAMAP" id="MF_00475">
    <property type="entry name" value="Trp_repressor"/>
    <property type="match status" value="1"/>
</dbReference>
<dbReference type="InterPro" id="IPR000831">
    <property type="entry name" value="Trp_repress"/>
</dbReference>
<dbReference type="InterPro" id="IPR013335">
    <property type="entry name" value="Trp_repress_bac"/>
</dbReference>
<dbReference type="InterPro" id="IPR010921">
    <property type="entry name" value="Trp_repressor/repl_initiator"/>
</dbReference>
<dbReference type="InterPro" id="IPR038116">
    <property type="entry name" value="TrpR-like_sf"/>
</dbReference>
<dbReference type="NCBIfam" id="TIGR01321">
    <property type="entry name" value="TrpR"/>
    <property type="match status" value="1"/>
</dbReference>
<dbReference type="PANTHER" id="PTHR38025">
    <property type="entry name" value="TRP OPERON REPRESSOR"/>
    <property type="match status" value="1"/>
</dbReference>
<dbReference type="PANTHER" id="PTHR38025:SF1">
    <property type="entry name" value="TRP OPERON REPRESSOR"/>
    <property type="match status" value="1"/>
</dbReference>
<dbReference type="Pfam" id="PF01371">
    <property type="entry name" value="Trp_repressor"/>
    <property type="match status" value="1"/>
</dbReference>
<dbReference type="PIRSF" id="PIRSF003196">
    <property type="entry name" value="Trp_repressor"/>
    <property type="match status" value="1"/>
</dbReference>
<dbReference type="SUPFAM" id="SSF48295">
    <property type="entry name" value="TrpR-like"/>
    <property type="match status" value="1"/>
</dbReference>
<gene>
    <name evidence="1" type="primary">trpR</name>
    <name type="ordered locus">SeAg_B4907</name>
</gene>
<organism>
    <name type="scientific">Salmonella agona (strain SL483)</name>
    <dbReference type="NCBI Taxonomy" id="454166"/>
    <lineage>
        <taxon>Bacteria</taxon>
        <taxon>Pseudomonadati</taxon>
        <taxon>Pseudomonadota</taxon>
        <taxon>Gammaproteobacteria</taxon>
        <taxon>Enterobacterales</taxon>
        <taxon>Enterobacteriaceae</taxon>
        <taxon>Salmonella</taxon>
    </lineage>
</organism>
<keyword id="KW-0963">Cytoplasm</keyword>
<keyword id="KW-0238">DNA-binding</keyword>
<keyword id="KW-0678">Repressor</keyword>
<keyword id="KW-0804">Transcription</keyword>
<keyword id="KW-0805">Transcription regulation</keyword>